<dbReference type="EC" id="3.6.1.15" evidence="1"/>
<dbReference type="EMBL" id="CP000099">
    <property type="protein sequence ID" value="AAZ71945.1"/>
    <property type="molecule type" value="Genomic_DNA"/>
</dbReference>
<dbReference type="SMR" id="Q467J7"/>
<dbReference type="STRING" id="269797.Mbar_A3054"/>
<dbReference type="PaxDb" id="269797-Mbar_A3054"/>
<dbReference type="KEGG" id="mba:Mbar_A3054"/>
<dbReference type="eggNOG" id="arCOG01034">
    <property type="taxonomic scope" value="Archaea"/>
</dbReference>
<dbReference type="HOGENOM" id="CLU_103145_1_1_2"/>
<dbReference type="OrthoDB" id="52698at2157"/>
<dbReference type="GO" id="GO:0005524">
    <property type="term" value="F:ATP binding"/>
    <property type="evidence" value="ECO:0007669"/>
    <property type="project" value="UniProtKB-UniRule"/>
</dbReference>
<dbReference type="GO" id="GO:0017111">
    <property type="term" value="F:ribonucleoside triphosphate phosphatase activity"/>
    <property type="evidence" value="ECO:0007669"/>
    <property type="project" value="UniProtKB-UniRule"/>
</dbReference>
<dbReference type="CDD" id="cd19482">
    <property type="entry name" value="RecA-like_Thep1"/>
    <property type="match status" value="1"/>
</dbReference>
<dbReference type="Gene3D" id="3.40.50.300">
    <property type="entry name" value="P-loop containing nucleotide triphosphate hydrolases"/>
    <property type="match status" value="1"/>
</dbReference>
<dbReference type="HAMAP" id="MF_00796">
    <property type="entry name" value="NTPase_1"/>
    <property type="match status" value="1"/>
</dbReference>
<dbReference type="InterPro" id="IPR004948">
    <property type="entry name" value="Nuc-triphosphatase_THEP1"/>
</dbReference>
<dbReference type="InterPro" id="IPR027417">
    <property type="entry name" value="P-loop_NTPase"/>
</dbReference>
<dbReference type="NCBIfam" id="NF010248">
    <property type="entry name" value="PRK13695.1"/>
    <property type="match status" value="1"/>
</dbReference>
<dbReference type="PANTHER" id="PTHR43146">
    <property type="entry name" value="CANCER-RELATED NUCLEOSIDE-TRIPHOSPHATASE"/>
    <property type="match status" value="1"/>
</dbReference>
<dbReference type="PANTHER" id="PTHR43146:SF1">
    <property type="entry name" value="CANCER-RELATED NUCLEOSIDE-TRIPHOSPHATASE"/>
    <property type="match status" value="1"/>
</dbReference>
<dbReference type="Pfam" id="PF03266">
    <property type="entry name" value="NTPase_1"/>
    <property type="match status" value="1"/>
</dbReference>
<dbReference type="SUPFAM" id="SSF52540">
    <property type="entry name" value="P-loop containing nucleoside triphosphate hydrolases"/>
    <property type="match status" value="1"/>
</dbReference>
<proteinExistence type="inferred from homology"/>
<name>NTPTH_METBF</name>
<sequence>MLRIAVTGIPGIGKSTVVAKAAEKLADQPGFKIGGIQTAEIRKEGQREGFSIMDLATGKTGVLGSIRESGPRVGKYHVNLEDLEKIGANALRSAMDCDLIVIDEVGTMELKSEAFVSAVKVVLESDKPVLAVLHRSSSHQLVQRMRREFEVLVVNEKNRDGLPGKIANRFREMR</sequence>
<reference key="1">
    <citation type="journal article" date="2006" name="J. Bacteriol.">
        <title>The Methanosarcina barkeri genome: comparative analysis with Methanosarcina acetivorans and Methanosarcina mazei reveals extensive rearrangement within methanosarcinal genomes.</title>
        <authorList>
            <person name="Maeder D.L."/>
            <person name="Anderson I."/>
            <person name="Brettin T.S."/>
            <person name="Bruce D.C."/>
            <person name="Gilna P."/>
            <person name="Han C.S."/>
            <person name="Lapidus A."/>
            <person name="Metcalf W.W."/>
            <person name="Saunders E."/>
            <person name="Tapia R."/>
            <person name="Sowers K.R."/>
        </authorList>
    </citation>
    <scope>NUCLEOTIDE SEQUENCE [LARGE SCALE GENOMIC DNA]</scope>
    <source>
        <strain>Fusaro / DSM 804</strain>
    </source>
</reference>
<protein>
    <recommendedName>
        <fullName evidence="1">Nucleoside-triphosphatase THEP1</fullName>
        <shortName evidence="1">NTPase THEP1</shortName>
        <ecNumber evidence="1">3.6.1.15</ecNumber>
    </recommendedName>
    <alternativeName>
        <fullName evidence="1">Nucleoside triphosphate phosphohydrolase</fullName>
    </alternativeName>
</protein>
<evidence type="ECO:0000255" key="1">
    <source>
        <dbReference type="HAMAP-Rule" id="MF_00796"/>
    </source>
</evidence>
<accession>Q467J7</accession>
<organism>
    <name type="scientific">Methanosarcina barkeri (strain Fusaro / DSM 804)</name>
    <dbReference type="NCBI Taxonomy" id="269797"/>
    <lineage>
        <taxon>Archaea</taxon>
        <taxon>Methanobacteriati</taxon>
        <taxon>Methanobacteriota</taxon>
        <taxon>Stenosarchaea group</taxon>
        <taxon>Methanomicrobia</taxon>
        <taxon>Methanosarcinales</taxon>
        <taxon>Methanosarcinaceae</taxon>
        <taxon>Methanosarcina</taxon>
    </lineage>
</organism>
<feature type="chain" id="PRO_1000046953" description="Nucleoside-triphosphatase THEP1">
    <location>
        <begin position="1"/>
        <end position="174"/>
    </location>
</feature>
<feature type="binding site" evidence="1">
    <location>
        <begin position="8"/>
        <end position="15"/>
    </location>
    <ligand>
        <name>ATP</name>
        <dbReference type="ChEBI" id="CHEBI:30616"/>
    </ligand>
</feature>
<feature type="binding site" evidence="1">
    <location>
        <begin position="99"/>
        <end position="106"/>
    </location>
    <ligand>
        <name>ATP</name>
        <dbReference type="ChEBI" id="CHEBI:30616"/>
    </ligand>
</feature>
<comment type="function">
    <text evidence="1">Has nucleotide phosphatase activity towards ATP, GTP, CTP, TTP and UTP. May hydrolyze nucleoside diphosphates with lower efficiency.</text>
</comment>
<comment type="catalytic activity">
    <reaction evidence="1">
        <text>a ribonucleoside 5'-triphosphate + H2O = a ribonucleoside 5'-diphosphate + phosphate + H(+)</text>
        <dbReference type="Rhea" id="RHEA:23680"/>
        <dbReference type="ChEBI" id="CHEBI:15377"/>
        <dbReference type="ChEBI" id="CHEBI:15378"/>
        <dbReference type="ChEBI" id="CHEBI:43474"/>
        <dbReference type="ChEBI" id="CHEBI:57930"/>
        <dbReference type="ChEBI" id="CHEBI:61557"/>
        <dbReference type="EC" id="3.6.1.15"/>
    </reaction>
</comment>
<comment type="similarity">
    <text evidence="1">Belongs to the THEP1 NTPase family.</text>
</comment>
<keyword id="KW-0067">ATP-binding</keyword>
<keyword id="KW-0378">Hydrolase</keyword>
<keyword id="KW-0547">Nucleotide-binding</keyword>
<gene>
    <name type="ordered locus">Mbar_A3054</name>
</gene>